<proteinExistence type="inferred from homology"/>
<dbReference type="EMBL" id="AE017180">
    <property type="protein sequence ID" value="AAR35199.1"/>
    <property type="molecule type" value="Genomic_DNA"/>
</dbReference>
<dbReference type="RefSeq" id="NP_952872.1">
    <property type="nucleotide sequence ID" value="NC_002939.5"/>
</dbReference>
<dbReference type="RefSeq" id="WP_010942467.1">
    <property type="nucleotide sequence ID" value="NC_002939.5"/>
</dbReference>
<dbReference type="SMR" id="P61667"/>
<dbReference type="FunCoup" id="P61667">
    <property type="interactions" value="458"/>
</dbReference>
<dbReference type="STRING" id="243231.GSU1822"/>
<dbReference type="EnsemblBacteria" id="AAR35199">
    <property type="protein sequence ID" value="AAR35199"/>
    <property type="gene ID" value="GSU1822"/>
</dbReference>
<dbReference type="KEGG" id="gsu:GSU1822"/>
<dbReference type="PATRIC" id="fig|243231.5.peg.1859"/>
<dbReference type="eggNOG" id="COG0249">
    <property type="taxonomic scope" value="Bacteria"/>
</dbReference>
<dbReference type="HOGENOM" id="CLU_002472_4_0_7"/>
<dbReference type="InParanoid" id="P61667"/>
<dbReference type="OrthoDB" id="9802448at2"/>
<dbReference type="Proteomes" id="UP000000577">
    <property type="component" value="Chromosome"/>
</dbReference>
<dbReference type="GO" id="GO:0005829">
    <property type="term" value="C:cytosol"/>
    <property type="evidence" value="ECO:0000318"/>
    <property type="project" value="GO_Central"/>
</dbReference>
<dbReference type="GO" id="GO:0005524">
    <property type="term" value="F:ATP binding"/>
    <property type="evidence" value="ECO:0007669"/>
    <property type="project" value="UniProtKB-UniRule"/>
</dbReference>
<dbReference type="GO" id="GO:0140664">
    <property type="term" value="F:ATP-dependent DNA damage sensor activity"/>
    <property type="evidence" value="ECO:0007669"/>
    <property type="project" value="InterPro"/>
</dbReference>
<dbReference type="GO" id="GO:0003684">
    <property type="term" value="F:damaged DNA binding"/>
    <property type="evidence" value="ECO:0007669"/>
    <property type="project" value="UniProtKB-UniRule"/>
</dbReference>
<dbReference type="GO" id="GO:0030983">
    <property type="term" value="F:mismatched DNA binding"/>
    <property type="evidence" value="ECO:0000318"/>
    <property type="project" value="GO_Central"/>
</dbReference>
<dbReference type="GO" id="GO:0006298">
    <property type="term" value="P:mismatch repair"/>
    <property type="evidence" value="ECO:0000318"/>
    <property type="project" value="GO_Central"/>
</dbReference>
<dbReference type="CDD" id="cd03284">
    <property type="entry name" value="ABC_MutS1"/>
    <property type="match status" value="1"/>
</dbReference>
<dbReference type="FunFam" id="1.10.1420.10:FF:000007">
    <property type="entry name" value="DNA mismatch repair protein MutS"/>
    <property type="match status" value="1"/>
</dbReference>
<dbReference type="FunFam" id="3.40.1170.10:FF:000001">
    <property type="entry name" value="DNA mismatch repair protein MutS"/>
    <property type="match status" value="1"/>
</dbReference>
<dbReference type="Gene3D" id="1.10.1420.10">
    <property type="match status" value="2"/>
</dbReference>
<dbReference type="Gene3D" id="3.40.1170.10">
    <property type="entry name" value="DNA repair protein MutS, domain I"/>
    <property type="match status" value="1"/>
</dbReference>
<dbReference type="Gene3D" id="3.30.420.110">
    <property type="entry name" value="MutS, connector domain"/>
    <property type="match status" value="1"/>
</dbReference>
<dbReference type="Gene3D" id="3.40.50.300">
    <property type="entry name" value="P-loop containing nucleotide triphosphate hydrolases"/>
    <property type="match status" value="1"/>
</dbReference>
<dbReference type="HAMAP" id="MF_00096">
    <property type="entry name" value="MutS"/>
    <property type="match status" value="1"/>
</dbReference>
<dbReference type="InterPro" id="IPR005748">
    <property type="entry name" value="DNA_mismatch_repair_MutS"/>
</dbReference>
<dbReference type="InterPro" id="IPR007695">
    <property type="entry name" value="DNA_mismatch_repair_MutS-lik_N"/>
</dbReference>
<dbReference type="InterPro" id="IPR017261">
    <property type="entry name" value="DNA_mismatch_repair_MutS/MSH"/>
</dbReference>
<dbReference type="InterPro" id="IPR000432">
    <property type="entry name" value="DNA_mismatch_repair_MutS_C"/>
</dbReference>
<dbReference type="InterPro" id="IPR007861">
    <property type="entry name" value="DNA_mismatch_repair_MutS_clamp"/>
</dbReference>
<dbReference type="InterPro" id="IPR007696">
    <property type="entry name" value="DNA_mismatch_repair_MutS_core"/>
</dbReference>
<dbReference type="InterPro" id="IPR016151">
    <property type="entry name" value="DNA_mismatch_repair_MutS_N"/>
</dbReference>
<dbReference type="InterPro" id="IPR036187">
    <property type="entry name" value="DNA_mismatch_repair_MutS_sf"/>
</dbReference>
<dbReference type="InterPro" id="IPR007860">
    <property type="entry name" value="DNA_mmatch_repair_MutS_con_dom"/>
</dbReference>
<dbReference type="InterPro" id="IPR045076">
    <property type="entry name" value="MutS"/>
</dbReference>
<dbReference type="InterPro" id="IPR036678">
    <property type="entry name" value="MutS_con_dom_sf"/>
</dbReference>
<dbReference type="InterPro" id="IPR027417">
    <property type="entry name" value="P-loop_NTPase"/>
</dbReference>
<dbReference type="NCBIfam" id="TIGR01070">
    <property type="entry name" value="mutS1"/>
    <property type="match status" value="1"/>
</dbReference>
<dbReference type="NCBIfam" id="NF003810">
    <property type="entry name" value="PRK05399.1"/>
    <property type="match status" value="1"/>
</dbReference>
<dbReference type="PANTHER" id="PTHR11361:SF34">
    <property type="entry name" value="DNA MISMATCH REPAIR PROTEIN MSH1, MITOCHONDRIAL"/>
    <property type="match status" value="1"/>
</dbReference>
<dbReference type="PANTHER" id="PTHR11361">
    <property type="entry name" value="DNA MISMATCH REPAIR PROTEIN MUTS FAMILY MEMBER"/>
    <property type="match status" value="1"/>
</dbReference>
<dbReference type="Pfam" id="PF01624">
    <property type="entry name" value="MutS_I"/>
    <property type="match status" value="1"/>
</dbReference>
<dbReference type="Pfam" id="PF05188">
    <property type="entry name" value="MutS_II"/>
    <property type="match status" value="1"/>
</dbReference>
<dbReference type="Pfam" id="PF05192">
    <property type="entry name" value="MutS_III"/>
    <property type="match status" value="1"/>
</dbReference>
<dbReference type="Pfam" id="PF05190">
    <property type="entry name" value="MutS_IV"/>
    <property type="match status" value="1"/>
</dbReference>
<dbReference type="Pfam" id="PF00488">
    <property type="entry name" value="MutS_V"/>
    <property type="match status" value="1"/>
</dbReference>
<dbReference type="PIRSF" id="PIRSF037677">
    <property type="entry name" value="DNA_mis_repair_Msh6"/>
    <property type="match status" value="1"/>
</dbReference>
<dbReference type="SMART" id="SM00534">
    <property type="entry name" value="MUTSac"/>
    <property type="match status" value="1"/>
</dbReference>
<dbReference type="SMART" id="SM00533">
    <property type="entry name" value="MUTSd"/>
    <property type="match status" value="1"/>
</dbReference>
<dbReference type="SUPFAM" id="SSF55271">
    <property type="entry name" value="DNA repair protein MutS, domain I"/>
    <property type="match status" value="1"/>
</dbReference>
<dbReference type="SUPFAM" id="SSF53150">
    <property type="entry name" value="DNA repair protein MutS, domain II"/>
    <property type="match status" value="1"/>
</dbReference>
<dbReference type="SUPFAM" id="SSF48334">
    <property type="entry name" value="DNA repair protein MutS, domain III"/>
    <property type="match status" value="1"/>
</dbReference>
<dbReference type="SUPFAM" id="SSF52540">
    <property type="entry name" value="P-loop containing nucleoside triphosphate hydrolases"/>
    <property type="match status" value="1"/>
</dbReference>
<dbReference type="PROSITE" id="PS00486">
    <property type="entry name" value="DNA_MISMATCH_REPAIR_2"/>
    <property type="match status" value="1"/>
</dbReference>
<reference key="1">
    <citation type="journal article" date="2003" name="Science">
        <title>Genome of Geobacter sulfurreducens: metal reduction in subsurface environments.</title>
        <authorList>
            <person name="Methe B.A."/>
            <person name="Nelson K.E."/>
            <person name="Eisen J.A."/>
            <person name="Paulsen I.T."/>
            <person name="Nelson W.C."/>
            <person name="Heidelberg J.F."/>
            <person name="Wu D."/>
            <person name="Wu M."/>
            <person name="Ward N.L."/>
            <person name="Beanan M.J."/>
            <person name="Dodson R.J."/>
            <person name="Madupu R."/>
            <person name="Brinkac L.M."/>
            <person name="Daugherty S.C."/>
            <person name="DeBoy R.T."/>
            <person name="Durkin A.S."/>
            <person name="Gwinn M.L."/>
            <person name="Kolonay J.F."/>
            <person name="Sullivan S.A."/>
            <person name="Haft D.H."/>
            <person name="Selengut J."/>
            <person name="Davidsen T.M."/>
            <person name="Zafar N."/>
            <person name="White O."/>
            <person name="Tran B."/>
            <person name="Romero C."/>
            <person name="Forberger H.A."/>
            <person name="Weidman J.F."/>
            <person name="Khouri H.M."/>
            <person name="Feldblyum T.V."/>
            <person name="Utterback T.R."/>
            <person name="Van Aken S.E."/>
            <person name="Lovley D.R."/>
            <person name="Fraser C.M."/>
        </authorList>
    </citation>
    <scope>NUCLEOTIDE SEQUENCE [LARGE SCALE GENOMIC DNA]</scope>
    <source>
        <strain>ATCC 51573 / DSM 12127 / PCA</strain>
    </source>
</reference>
<comment type="function">
    <text evidence="1">This protein is involved in the repair of mismatches in DNA. It is possible that it carries out the mismatch recognition step. This protein has a weak ATPase activity.</text>
</comment>
<comment type="similarity">
    <text evidence="1">Belongs to the DNA mismatch repair MutS family.</text>
</comment>
<name>MUTS_GEOSL</name>
<gene>
    <name evidence="1" type="primary">mutS</name>
    <name type="ordered locus">GSU1822</name>
</gene>
<keyword id="KW-0067">ATP-binding</keyword>
<keyword id="KW-0227">DNA damage</keyword>
<keyword id="KW-0234">DNA repair</keyword>
<keyword id="KW-0238">DNA-binding</keyword>
<keyword id="KW-0547">Nucleotide-binding</keyword>
<keyword id="KW-1185">Reference proteome</keyword>
<accession>P61667</accession>
<evidence type="ECO:0000255" key="1">
    <source>
        <dbReference type="HAMAP-Rule" id="MF_00096"/>
    </source>
</evidence>
<protein>
    <recommendedName>
        <fullName evidence="1">DNA mismatch repair protein MutS</fullName>
    </recommendedName>
</protein>
<feature type="chain" id="PRO_0000115099" description="DNA mismatch repair protein MutS">
    <location>
        <begin position="1"/>
        <end position="871"/>
    </location>
</feature>
<feature type="binding site" evidence="1">
    <location>
        <begin position="621"/>
        <end position="628"/>
    </location>
    <ligand>
        <name>ATP</name>
        <dbReference type="ChEBI" id="CHEBI:30616"/>
    </ligand>
</feature>
<sequence>MSELTPMMRQYLEIKADHPDAILFFRLGDFYEMFLDDAVKASRILDITLTSRNKGGDGADIPLCGVPFHSAAPYIAKLVEAGEKVAICEQVEDPKSVKGIVKREVVKVVTPGLVIDAESLSPKENNYLLSLFPGPDRWGVAYLDLSTGDFRVTETDSADAAWAEVACVNPREILMPLSFRDGGAGSERPDLAAGRMLSYVDEWVYDAEYAERMVRNHFGVASAEAAGCGSMDCGLRAVAAVLHYLQQTQKGDVRHISYLQAYRTQEFLVLDESSRRNLELNATIGDGKRRGSLLGLLDRTVTAMGGRKLKQWINYPLVSIEKINERLDAVEELVADAEFRQGVRAALDGVYDLERLNGRISLASASAKDLVALRASLVRLPSLIALLTPAASTLLARLRDGIDLLADVEELIGRGIVPDPPFVLREGGIIAQGYHSELDELRSISREGKGFIARLEAQEKARTGISSLKVRYNKVFGYYIEVTKSNLSAIPDDYIRRQTLANAERFITPELKEYEEKVLGAEDRIVELEYALFQDIRQRVAAQGERIARTADRLATLDVLAALADVAHDHRYVRPTVDEGDAIVVTGGRHPVVEALNRSERFVANDVQLDNGENQLVIITGPNMAGKSTFMRQVALIVLMAQTGSFVPADEASIGVVDRIFTRVGASDNLARGQSTFMVEMMETAAILRNATPRSLVVLDEIGRGTSTFDGVSIAWAVAEYLHDTERCAAKTLFATHYHELTELAVTRNRVKNCNVAVKEWNDQVIFLRKIVEGGASHSYGIQVARLAGLPQEVIERAKEILHNLEKGEYAEGGIPRIARGKRAGAPKPSPQLSLFDQGDDLLRRRIAGLNIAALTPLEALNILDELKRMV</sequence>
<organism>
    <name type="scientific">Geobacter sulfurreducens (strain ATCC 51573 / DSM 12127 / PCA)</name>
    <dbReference type="NCBI Taxonomy" id="243231"/>
    <lineage>
        <taxon>Bacteria</taxon>
        <taxon>Pseudomonadati</taxon>
        <taxon>Thermodesulfobacteriota</taxon>
        <taxon>Desulfuromonadia</taxon>
        <taxon>Geobacterales</taxon>
        <taxon>Geobacteraceae</taxon>
        <taxon>Geobacter</taxon>
    </lineage>
</organism>